<organism>
    <name type="scientific">Musca domestica</name>
    <name type="common">House fly</name>
    <dbReference type="NCBI Taxonomy" id="7370"/>
    <lineage>
        <taxon>Eukaryota</taxon>
        <taxon>Metazoa</taxon>
        <taxon>Ecdysozoa</taxon>
        <taxon>Arthropoda</taxon>
        <taxon>Hexapoda</taxon>
        <taxon>Insecta</taxon>
        <taxon>Pterygota</taxon>
        <taxon>Neoptera</taxon>
        <taxon>Endopterygota</taxon>
        <taxon>Diptera</taxon>
        <taxon>Brachycera</taxon>
        <taxon>Muscomorpha</taxon>
        <taxon>Muscoidea</taxon>
        <taxon>Muscidae</taxon>
        <taxon>Musca</taxon>
    </lineage>
</organism>
<feature type="signal peptide" evidence="3">
    <location>
        <begin position="1"/>
        <end position="19"/>
    </location>
</feature>
<feature type="chain" id="PRO_0000018508" description="Lysozyme 1">
    <location>
        <begin position="20"/>
        <end position="141"/>
    </location>
</feature>
<feature type="domain" description="C-type lysozyme" evidence="2">
    <location>
        <begin position="20"/>
        <end position="141"/>
    </location>
</feature>
<feature type="active site" evidence="2">
    <location>
        <position position="51"/>
    </location>
</feature>
<feature type="active site" evidence="2">
    <location>
        <position position="69"/>
    </location>
</feature>
<feature type="glycosylation site" description="N-linked (GlcNAc...) asparagine" evidence="1">
    <location>
        <position position="65"/>
    </location>
</feature>
<feature type="glycosylation site" description="N-linked (GlcNAc...) asparagine" evidence="1">
    <location>
        <position position="104"/>
    </location>
</feature>
<feature type="disulfide bond" evidence="2">
    <location>
        <begin position="25"/>
        <end position="140"/>
    </location>
</feature>
<feature type="disulfide bond" evidence="2">
    <location>
        <begin position="46"/>
        <end position="130"/>
    </location>
</feature>
<feature type="disulfide bond" evidence="2">
    <location>
        <begin position="81"/>
        <end position="97"/>
    </location>
</feature>
<feature type="disulfide bond" evidence="2">
    <location>
        <begin position="93"/>
        <end position="111"/>
    </location>
</feature>
<feature type="helix" evidence="4">
    <location>
        <begin position="24"/>
        <end position="33"/>
    </location>
</feature>
<feature type="helix" evidence="4">
    <location>
        <begin position="38"/>
        <end position="40"/>
    </location>
</feature>
<feature type="helix" evidence="4">
    <location>
        <begin position="41"/>
        <end position="52"/>
    </location>
</feature>
<feature type="strand" evidence="4">
    <location>
        <begin position="55"/>
        <end position="57"/>
    </location>
</feature>
<feature type="turn" evidence="4">
    <location>
        <begin position="71"/>
        <end position="74"/>
    </location>
</feature>
<feature type="turn" evidence="4">
    <location>
        <begin position="77"/>
        <end position="80"/>
    </location>
</feature>
<feature type="helix" evidence="4">
    <location>
        <begin position="97"/>
        <end position="101"/>
    </location>
</feature>
<feature type="strand" evidence="4">
    <location>
        <begin position="102"/>
        <end position="104"/>
    </location>
</feature>
<feature type="helix" evidence="4">
    <location>
        <begin position="106"/>
        <end position="119"/>
    </location>
</feature>
<feature type="helix" evidence="4">
    <location>
        <begin position="121"/>
        <end position="123"/>
    </location>
</feature>
<feature type="helix" evidence="4">
    <location>
        <begin position="127"/>
        <end position="130"/>
    </location>
</feature>
<feature type="helix" evidence="4">
    <location>
        <begin position="138"/>
        <end position="140"/>
    </location>
</feature>
<name>LYS1_MUSDO</name>
<evidence type="ECO:0000255" key="1"/>
<evidence type="ECO:0000255" key="2">
    <source>
        <dbReference type="PROSITE-ProRule" id="PRU00680"/>
    </source>
</evidence>
<evidence type="ECO:0000269" key="3">
    <source>
    </source>
</evidence>
<evidence type="ECO:0007829" key="4">
    <source>
        <dbReference type="PDB" id="2FBD"/>
    </source>
</evidence>
<keyword id="KW-0002">3D-structure</keyword>
<keyword id="KW-0903">Direct protein sequencing</keyword>
<keyword id="KW-1015">Disulfide bond</keyword>
<keyword id="KW-0325">Glycoprotein</keyword>
<keyword id="KW-0326">Glycosidase</keyword>
<keyword id="KW-0378">Hydrolase</keyword>
<keyword id="KW-1185">Reference proteome</keyword>
<keyword id="KW-0732">Signal</keyword>
<sequence length="141" mass="15733">MKFFIVLVAALALAAPAMGKTFTRCSLAREMYALGVPKSELPQWTCIAEHESSYRTNVVGPTNSNGSNDYGIFQINNYYWCQPSNGRFSYNECHLSCDALLTDNISNSVTCARKIKSQQGWTAWSTWKYCSGSLPSINDCF</sequence>
<comment type="function">
    <text>May not function as a self-defense protein, but as a digestive enzyme, probably in the gut of the insect body. Inactive towards Micrococcus luteus. Active toward glycol chitin.</text>
</comment>
<comment type="catalytic activity">
    <reaction>
        <text>Hydrolysis of (1-&gt;4)-beta-linkages between N-acetylmuramic acid and N-acetyl-D-glucosamine residues in a peptidoglycan and between N-acetyl-D-glucosamine residues in chitodextrins.</text>
        <dbReference type="EC" id="3.2.1.17"/>
    </reaction>
</comment>
<comment type="biophysicochemical properties">
    <phDependence>
        <text>Active at acidic pHs. Inactive above pH 7.</text>
    </phDependence>
</comment>
<comment type="similarity">
    <text evidence="2">Belongs to the glycosyl hydrolase 22 family.</text>
</comment>
<accession>Q7YT16</accession>
<accession>Q7M437</accession>
<protein>
    <recommendedName>
        <fullName>Lysozyme 1</fullName>
        <ecNumber>3.2.1.17</ecNumber>
    </recommendedName>
    <alternativeName>
        <fullName>1,4-beta-N-acetylmuramidase 1</fullName>
    </alternativeName>
</protein>
<proteinExistence type="evidence at protein level"/>
<dbReference type="EC" id="3.2.1.17"/>
<dbReference type="EMBL" id="AY344589">
    <property type="protein sequence ID" value="AAQ20048.1"/>
    <property type="molecule type" value="mRNA"/>
</dbReference>
<dbReference type="PIR" id="PC4062">
    <property type="entry name" value="PC4062"/>
</dbReference>
<dbReference type="RefSeq" id="NP_001295901.1">
    <property type="nucleotide sequence ID" value="NM_001308972.2"/>
</dbReference>
<dbReference type="RefSeq" id="XP_005185827.1">
    <property type="nucleotide sequence ID" value="XM_005185770.4"/>
</dbReference>
<dbReference type="RefSeq" id="XP_005185835.2">
    <property type="nucleotide sequence ID" value="XM_005185778.4"/>
</dbReference>
<dbReference type="RefSeq" id="XP_019891658.1">
    <property type="nucleotide sequence ID" value="XM_020036099.1"/>
</dbReference>
<dbReference type="RefSeq" id="XP_019893133.2">
    <property type="nucleotide sequence ID" value="XM_020037574.2"/>
</dbReference>
<dbReference type="RefSeq" id="XP_019893140.1">
    <property type="nucleotide sequence ID" value="XM_020037581.2"/>
</dbReference>
<dbReference type="RefSeq" id="XP_019893141.1">
    <property type="nucleotide sequence ID" value="XM_020037582.1"/>
</dbReference>
<dbReference type="RefSeq" id="XP_058983573.1">
    <property type="nucleotide sequence ID" value="XM_059127590.1"/>
</dbReference>
<dbReference type="RefSeq" id="XP_058983578.1">
    <property type="nucleotide sequence ID" value="XM_059127595.1"/>
</dbReference>
<dbReference type="RefSeq" id="XP_058983580.1">
    <property type="nucleotide sequence ID" value="XM_059127597.1"/>
</dbReference>
<dbReference type="RefSeq" id="XP_058983581.1">
    <property type="nucleotide sequence ID" value="XM_059127598.1"/>
</dbReference>
<dbReference type="RefSeq" id="XP_058983582.1">
    <property type="nucleotide sequence ID" value="XM_059127599.1"/>
</dbReference>
<dbReference type="RefSeq" id="XP_058983584.1">
    <property type="nucleotide sequence ID" value="XM_059127601.1"/>
</dbReference>
<dbReference type="PDB" id="2FBD">
    <property type="method" value="X-ray"/>
    <property type="resolution" value="1.90 A"/>
    <property type="chains" value="A/B=20-141"/>
</dbReference>
<dbReference type="PDB" id="2H5Z">
    <property type="method" value="X-ray"/>
    <property type="resolution" value="1.92 A"/>
    <property type="chains" value="A/B=20-141"/>
</dbReference>
<dbReference type="PDBsum" id="2FBD"/>
<dbReference type="PDBsum" id="2H5Z"/>
<dbReference type="SMR" id="Q7YT16"/>
<dbReference type="CAZy" id="GH22">
    <property type="family name" value="Glycoside Hydrolase Family 22"/>
</dbReference>
<dbReference type="EnsemblMetazoa" id="MDOA012752-RB">
    <property type="protein sequence ID" value="MDOA012752-PB"/>
    <property type="gene ID" value="MDOA012752"/>
</dbReference>
<dbReference type="EnsemblMetazoa" id="MDOA012752-RD">
    <property type="protein sequence ID" value="MDOA012752-PD"/>
    <property type="gene ID" value="MDOA012752"/>
</dbReference>
<dbReference type="EnsemblMetazoa" id="MDOA012752-RE">
    <property type="protein sequence ID" value="MDOA012752-PE"/>
    <property type="gene ID" value="MDOA012752"/>
</dbReference>
<dbReference type="EnsemblMetazoa" id="MDOA012964-RB">
    <property type="protein sequence ID" value="MDOA012964-PB"/>
    <property type="gene ID" value="MDOA012964"/>
</dbReference>
<dbReference type="EnsemblMetazoa" id="MDOA013199-RA">
    <property type="protein sequence ID" value="MDOA013199-PA"/>
    <property type="gene ID" value="MDOA013199"/>
</dbReference>
<dbReference type="GeneID" id="101892974"/>
<dbReference type="GeneID" id="101893151"/>
<dbReference type="GeneID" id="101893594"/>
<dbReference type="GeneID" id="101894169"/>
<dbReference type="GeneID" id="101894601"/>
<dbReference type="GeneID" id="101895951"/>
<dbReference type="GeneID" id="131804556"/>
<dbReference type="GeneID" id="131804561"/>
<dbReference type="GeneID" id="131804563"/>
<dbReference type="GeneID" id="131804565"/>
<dbReference type="GeneID" id="131804566"/>
<dbReference type="KEGG" id="mde:101892974"/>
<dbReference type="KEGG" id="mde:101893151"/>
<dbReference type="KEGG" id="mde:101894169"/>
<dbReference type="KEGG" id="mde:101894601"/>
<dbReference type="KEGG" id="mde:101895951"/>
<dbReference type="VEuPathDB" id="VectorBase:MDOA012752"/>
<dbReference type="VEuPathDB" id="VectorBase:MDOA012964"/>
<dbReference type="VEuPathDB" id="VectorBase:MDOA013199"/>
<dbReference type="VEuPathDB" id="VectorBase:MDOMA2_003786"/>
<dbReference type="VEuPathDB" id="VectorBase:MDOMA2_005321"/>
<dbReference type="VEuPathDB" id="VectorBase:MDOMA2_005604"/>
<dbReference type="VEuPathDB" id="VectorBase:MDOMA2_007469"/>
<dbReference type="VEuPathDB" id="VectorBase:MDOMA2_007572"/>
<dbReference type="VEuPathDB" id="VectorBase:MDOMA2_014170"/>
<dbReference type="VEuPathDB" id="VectorBase:MDOMA2_014196"/>
<dbReference type="VEuPathDB" id="VectorBase:MDOMA2_014945"/>
<dbReference type="VEuPathDB" id="VectorBase:MDOMA2_015411"/>
<dbReference type="VEuPathDB" id="VectorBase:MDOMA2_015557"/>
<dbReference type="VEuPathDB" id="VectorBase:MDOMA2_015832"/>
<dbReference type="eggNOG" id="ENOG502S1S1">
    <property type="taxonomic scope" value="Eukaryota"/>
</dbReference>
<dbReference type="OrthoDB" id="17373at2759"/>
<dbReference type="BRENDA" id="3.2.1.17">
    <property type="organism ID" value="3486"/>
</dbReference>
<dbReference type="EvolutionaryTrace" id="Q7YT16"/>
<dbReference type="Proteomes" id="UP000694905">
    <property type="component" value="Unplaced"/>
</dbReference>
<dbReference type="GO" id="GO:0003796">
    <property type="term" value="F:lysozyme activity"/>
    <property type="evidence" value="ECO:0007669"/>
    <property type="project" value="UniProtKB-EC"/>
</dbReference>
<dbReference type="CDD" id="cd16899">
    <property type="entry name" value="LYZ_C_invert"/>
    <property type="match status" value="1"/>
</dbReference>
<dbReference type="FunFam" id="1.10.530.10:FF:000001">
    <property type="entry name" value="Lysozyme C"/>
    <property type="match status" value="1"/>
</dbReference>
<dbReference type="Gene3D" id="1.10.530.10">
    <property type="match status" value="1"/>
</dbReference>
<dbReference type="InterPro" id="IPR001916">
    <property type="entry name" value="Glyco_hydro_22"/>
</dbReference>
<dbReference type="InterPro" id="IPR019799">
    <property type="entry name" value="Glyco_hydro_22_CS"/>
</dbReference>
<dbReference type="InterPro" id="IPR000974">
    <property type="entry name" value="Glyco_hydro_22_lys"/>
</dbReference>
<dbReference type="InterPro" id="IPR023346">
    <property type="entry name" value="Lysozyme-like_dom_sf"/>
</dbReference>
<dbReference type="PANTHER" id="PTHR11407:SF36">
    <property type="entry name" value="GEO02684P1-RELATED"/>
    <property type="match status" value="1"/>
</dbReference>
<dbReference type="PANTHER" id="PTHR11407">
    <property type="entry name" value="LYSOZYME C"/>
    <property type="match status" value="1"/>
</dbReference>
<dbReference type="Pfam" id="PF00062">
    <property type="entry name" value="Lys"/>
    <property type="match status" value="1"/>
</dbReference>
<dbReference type="PRINTS" id="PR00137">
    <property type="entry name" value="LYSOZYME"/>
</dbReference>
<dbReference type="PRINTS" id="PR00135">
    <property type="entry name" value="LYZLACT"/>
</dbReference>
<dbReference type="SMART" id="SM00263">
    <property type="entry name" value="LYZ1"/>
    <property type="match status" value="1"/>
</dbReference>
<dbReference type="SUPFAM" id="SSF53955">
    <property type="entry name" value="Lysozyme-like"/>
    <property type="match status" value="1"/>
</dbReference>
<dbReference type="PROSITE" id="PS00128">
    <property type="entry name" value="GLYCOSYL_HYDROL_F22_1"/>
    <property type="match status" value="1"/>
</dbReference>
<dbReference type="PROSITE" id="PS51348">
    <property type="entry name" value="GLYCOSYL_HYDROL_F22_2"/>
    <property type="match status" value="1"/>
</dbReference>
<reference key="1">
    <citation type="submission" date="2003-07" db="EMBL/GenBank/DDBJ databases">
        <title>Cloning, sequencing and characterization of a digestive lysozyme from Musca domestica midgut.</title>
        <authorList>
            <person name="Chimoy P."/>
            <person name="Marana S.R."/>
            <person name="Ferreira C."/>
            <person name="Terra W.R."/>
        </authorList>
    </citation>
    <scope>NUCLEOTIDE SEQUENCE [MRNA]</scope>
    <source>
        <tissue>Midgut epithelium</tissue>
    </source>
</reference>
<reference key="2">
    <citation type="journal article" date="1995" name="J. Biochem.">
        <title>Insect lysozyme from house fly (Musca domestica) larvae: possible digestive function based on sequence and enzymatic properties.</title>
        <authorList>
            <person name="Ito Y."/>
            <person name="Nakamura M."/>
            <person name="Hotani T."/>
            <person name="Imoto T."/>
        </authorList>
    </citation>
    <scope>PROTEIN SEQUENCE OF 20-141</scope>
    <source>
        <tissue>Larva</tissue>
    </source>
</reference>